<evidence type="ECO:0000255" key="1">
    <source>
        <dbReference type="HAMAP-Rule" id="MF_01322"/>
    </source>
</evidence>
<evidence type="ECO:0000256" key="2">
    <source>
        <dbReference type="SAM" id="MobiDB-lite"/>
    </source>
</evidence>
<organism>
    <name type="scientific">Bradyrhizobium sp. (strain ORS 278)</name>
    <dbReference type="NCBI Taxonomy" id="114615"/>
    <lineage>
        <taxon>Bacteria</taxon>
        <taxon>Pseudomonadati</taxon>
        <taxon>Pseudomonadota</taxon>
        <taxon>Alphaproteobacteria</taxon>
        <taxon>Hyphomicrobiales</taxon>
        <taxon>Nitrobacteraceae</taxon>
        <taxon>Bradyrhizobium</taxon>
    </lineage>
</organism>
<gene>
    <name evidence="1" type="primary">rpoC</name>
    <name type="ordered locus">BRADO3055</name>
</gene>
<comment type="function">
    <text evidence="1">DNA-dependent RNA polymerase catalyzes the transcription of DNA into RNA using the four ribonucleoside triphosphates as substrates.</text>
</comment>
<comment type="catalytic activity">
    <reaction evidence="1">
        <text>RNA(n) + a ribonucleoside 5'-triphosphate = RNA(n+1) + diphosphate</text>
        <dbReference type="Rhea" id="RHEA:21248"/>
        <dbReference type="Rhea" id="RHEA-COMP:14527"/>
        <dbReference type="Rhea" id="RHEA-COMP:17342"/>
        <dbReference type="ChEBI" id="CHEBI:33019"/>
        <dbReference type="ChEBI" id="CHEBI:61557"/>
        <dbReference type="ChEBI" id="CHEBI:140395"/>
        <dbReference type="EC" id="2.7.7.6"/>
    </reaction>
</comment>
<comment type="cofactor">
    <cofactor evidence="1">
        <name>Mg(2+)</name>
        <dbReference type="ChEBI" id="CHEBI:18420"/>
    </cofactor>
    <text evidence="1">Binds 1 Mg(2+) ion per subunit.</text>
</comment>
<comment type="cofactor">
    <cofactor evidence="1">
        <name>Zn(2+)</name>
        <dbReference type="ChEBI" id="CHEBI:29105"/>
    </cofactor>
    <text evidence="1">Binds 2 Zn(2+) ions per subunit.</text>
</comment>
<comment type="subunit">
    <text evidence="1">The RNAP catalytic core consists of 2 alpha, 1 beta, 1 beta' and 1 omega subunit. When a sigma factor is associated with the core the holoenzyme is formed, which can initiate transcription.</text>
</comment>
<comment type="similarity">
    <text evidence="1">Belongs to the RNA polymerase beta' chain family.</text>
</comment>
<dbReference type="EC" id="2.7.7.6" evidence="1"/>
<dbReference type="EMBL" id="CU234118">
    <property type="protein sequence ID" value="CAL76858.1"/>
    <property type="molecule type" value="Genomic_DNA"/>
</dbReference>
<dbReference type="RefSeq" id="WP_011926046.1">
    <property type="nucleotide sequence ID" value="NC_009445.1"/>
</dbReference>
<dbReference type="SMR" id="A4YSI2"/>
<dbReference type="STRING" id="114615.BRADO3055"/>
<dbReference type="KEGG" id="bra:BRADO3055"/>
<dbReference type="eggNOG" id="COG0086">
    <property type="taxonomic scope" value="Bacteria"/>
</dbReference>
<dbReference type="HOGENOM" id="CLU_000524_3_1_5"/>
<dbReference type="OrthoDB" id="9815296at2"/>
<dbReference type="Proteomes" id="UP000001994">
    <property type="component" value="Chromosome"/>
</dbReference>
<dbReference type="GO" id="GO:0000428">
    <property type="term" value="C:DNA-directed RNA polymerase complex"/>
    <property type="evidence" value="ECO:0007669"/>
    <property type="project" value="UniProtKB-KW"/>
</dbReference>
<dbReference type="GO" id="GO:0003677">
    <property type="term" value="F:DNA binding"/>
    <property type="evidence" value="ECO:0007669"/>
    <property type="project" value="UniProtKB-UniRule"/>
</dbReference>
<dbReference type="GO" id="GO:0003899">
    <property type="term" value="F:DNA-directed RNA polymerase activity"/>
    <property type="evidence" value="ECO:0007669"/>
    <property type="project" value="UniProtKB-UniRule"/>
</dbReference>
<dbReference type="GO" id="GO:0000287">
    <property type="term" value="F:magnesium ion binding"/>
    <property type="evidence" value="ECO:0007669"/>
    <property type="project" value="UniProtKB-UniRule"/>
</dbReference>
<dbReference type="GO" id="GO:0008270">
    <property type="term" value="F:zinc ion binding"/>
    <property type="evidence" value="ECO:0007669"/>
    <property type="project" value="UniProtKB-UniRule"/>
</dbReference>
<dbReference type="GO" id="GO:0006351">
    <property type="term" value="P:DNA-templated transcription"/>
    <property type="evidence" value="ECO:0007669"/>
    <property type="project" value="UniProtKB-UniRule"/>
</dbReference>
<dbReference type="CDD" id="cd02655">
    <property type="entry name" value="RNAP_beta'_C"/>
    <property type="match status" value="1"/>
</dbReference>
<dbReference type="CDD" id="cd01609">
    <property type="entry name" value="RNAP_beta'_N"/>
    <property type="match status" value="1"/>
</dbReference>
<dbReference type="Gene3D" id="1.10.132.30">
    <property type="match status" value="1"/>
</dbReference>
<dbReference type="Gene3D" id="1.10.150.390">
    <property type="match status" value="1"/>
</dbReference>
<dbReference type="Gene3D" id="1.10.1790.20">
    <property type="match status" value="1"/>
</dbReference>
<dbReference type="Gene3D" id="1.10.40.90">
    <property type="match status" value="1"/>
</dbReference>
<dbReference type="Gene3D" id="2.40.40.20">
    <property type="match status" value="1"/>
</dbReference>
<dbReference type="Gene3D" id="2.40.50.100">
    <property type="match status" value="3"/>
</dbReference>
<dbReference type="Gene3D" id="4.10.860.120">
    <property type="entry name" value="RNA polymerase II, clamp domain"/>
    <property type="match status" value="1"/>
</dbReference>
<dbReference type="Gene3D" id="1.10.274.100">
    <property type="entry name" value="RNA polymerase Rpb1, domain 3"/>
    <property type="match status" value="2"/>
</dbReference>
<dbReference type="HAMAP" id="MF_01322">
    <property type="entry name" value="RNApol_bact_RpoC"/>
    <property type="match status" value="1"/>
</dbReference>
<dbReference type="InterPro" id="IPR045867">
    <property type="entry name" value="DNA-dir_RpoC_beta_prime"/>
</dbReference>
<dbReference type="InterPro" id="IPR012754">
    <property type="entry name" value="DNA-dir_RpoC_beta_prime_bact"/>
</dbReference>
<dbReference type="InterPro" id="IPR000722">
    <property type="entry name" value="RNA_pol_asu"/>
</dbReference>
<dbReference type="InterPro" id="IPR006592">
    <property type="entry name" value="RNA_pol_N"/>
</dbReference>
<dbReference type="InterPro" id="IPR007080">
    <property type="entry name" value="RNA_pol_Rpb1_1"/>
</dbReference>
<dbReference type="InterPro" id="IPR007066">
    <property type="entry name" value="RNA_pol_Rpb1_3"/>
</dbReference>
<dbReference type="InterPro" id="IPR042102">
    <property type="entry name" value="RNA_pol_Rpb1_3_sf"/>
</dbReference>
<dbReference type="InterPro" id="IPR007083">
    <property type="entry name" value="RNA_pol_Rpb1_4"/>
</dbReference>
<dbReference type="InterPro" id="IPR007081">
    <property type="entry name" value="RNA_pol_Rpb1_5"/>
</dbReference>
<dbReference type="InterPro" id="IPR044893">
    <property type="entry name" value="RNA_pol_Rpb1_clamp_domain"/>
</dbReference>
<dbReference type="InterPro" id="IPR038120">
    <property type="entry name" value="Rpb1_funnel_sf"/>
</dbReference>
<dbReference type="NCBIfam" id="TIGR02386">
    <property type="entry name" value="rpoC_TIGR"/>
    <property type="match status" value="1"/>
</dbReference>
<dbReference type="PANTHER" id="PTHR19376">
    <property type="entry name" value="DNA-DIRECTED RNA POLYMERASE"/>
    <property type="match status" value="1"/>
</dbReference>
<dbReference type="PANTHER" id="PTHR19376:SF54">
    <property type="entry name" value="DNA-DIRECTED RNA POLYMERASE SUBUNIT BETA"/>
    <property type="match status" value="1"/>
</dbReference>
<dbReference type="Pfam" id="PF04997">
    <property type="entry name" value="RNA_pol_Rpb1_1"/>
    <property type="match status" value="1"/>
</dbReference>
<dbReference type="Pfam" id="PF00623">
    <property type="entry name" value="RNA_pol_Rpb1_2"/>
    <property type="match status" value="2"/>
</dbReference>
<dbReference type="Pfam" id="PF04983">
    <property type="entry name" value="RNA_pol_Rpb1_3"/>
    <property type="match status" value="1"/>
</dbReference>
<dbReference type="Pfam" id="PF05000">
    <property type="entry name" value="RNA_pol_Rpb1_4"/>
    <property type="match status" value="1"/>
</dbReference>
<dbReference type="Pfam" id="PF04998">
    <property type="entry name" value="RNA_pol_Rpb1_5"/>
    <property type="match status" value="1"/>
</dbReference>
<dbReference type="SMART" id="SM00663">
    <property type="entry name" value="RPOLA_N"/>
    <property type="match status" value="1"/>
</dbReference>
<dbReference type="SUPFAM" id="SSF64484">
    <property type="entry name" value="beta and beta-prime subunits of DNA dependent RNA-polymerase"/>
    <property type="match status" value="1"/>
</dbReference>
<feature type="chain" id="PRO_0000353301" description="DNA-directed RNA polymerase subunit beta'">
    <location>
        <begin position="1"/>
        <end position="1399"/>
    </location>
</feature>
<feature type="region of interest" description="Disordered" evidence="2">
    <location>
        <begin position="1379"/>
        <end position="1399"/>
    </location>
</feature>
<feature type="compositionally biased region" description="Pro residues" evidence="2">
    <location>
        <begin position="1387"/>
        <end position="1399"/>
    </location>
</feature>
<feature type="binding site" evidence="1">
    <location>
        <position position="71"/>
    </location>
    <ligand>
        <name>Zn(2+)</name>
        <dbReference type="ChEBI" id="CHEBI:29105"/>
        <label>1</label>
    </ligand>
</feature>
<feature type="binding site" evidence="1">
    <location>
        <position position="73"/>
    </location>
    <ligand>
        <name>Zn(2+)</name>
        <dbReference type="ChEBI" id="CHEBI:29105"/>
        <label>1</label>
    </ligand>
</feature>
<feature type="binding site" evidence="1">
    <location>
        <position position="86"/>
    </location>
    <ligand>
        <name>Zn(2+)</name>
        <dbReference type="ChEBI" id="CHEBI:29105"/>
        <label>1</label>
    </ligand>
</feature>
<feature type="binding site" evidence="1">
    <location>
        <position position="89"/>
    </location>
    <ligand>
        <name>Zn(2+)</name>
        <dbReference type="ChEBI" id="CHEBI:29105"/>
        <label>1</label>
    </ligand>
</feature>
<feature type="binding site" evidence="1">
    <location>
        <position position="462"/>
    </location>
    <ligand>
        <name>Mg(2+)</name>
        <dbReference type="ChEBI" id="CHEBI:18420"/>
    </ligand>
</feature>
<feature type="binding site" evidence="1">
    <location>
        <position position="464"/>
    </location>
    <ligand>
        <name>Mg(2+)</name>
        <dbReference type="ChEBI" id="CHEBI:18420"/>
    </ligand>
</feature>
<feature type="binding site" evidence="1">
    <location>
        <position position="466"/>
    </location>
    <ligand>
        <name>Mg(2+)</name>
        <dbReference type="ChEBI" id="CHEBI:18420"/>
    </ligand>
</feature>
<feature type="binding site" evidence="1">
    <location>
        <position position="810"/>
    </location>
    <ligand>
        <name>Zn(2+)</name>
        <dbReference type="ChEBI" id="CHEBI:29105"/>
        <label>2</label>
    </ligand>
</feature>
<feature type="binding site" evidence="1">
    <location>
        <position position="884"/>
    </location>
    <ligand>
        <name>Zn(2+)</name>
        <dbReference type="ChEBI" id="CHEBI:29105"/>
        <label>2</label>
    </ligand>
</feature>
<feature type="binding site" evidence="1">
    <location>
        <position position="891"/>
    </location>
    <ligand>
        <name>Zn(2+)</name>
        <dbReference type="ChEBI" id="CHEBI:29105"/>
        <label>2</label>
    </ligand>
</feature>
<feature type="binding site" evidence="1">
    <location>
        <position position="894"/>
    </location>
    <ligand>
        <name>Zn(2+)</name>
        <dbReference type="ChEBI" id="CHEBI:29105"/>
        <label>2</label>
    </ligand>
</feature>
<protein>
    <recommendedName>
        <fullName evidence="1">DNA-directed RNA polymerase subunit beta'</fullName>
        <shortName evidence="1">RNAP subunit beta'</shortName>
        <ecNumber evidence="1">2.7.7.6</ecNumber>
    </recommendedName>
    <alternativeName>
        <fullName evidence="1">RNA polymerase subunit beta'</fullName>
    </alternativeName>
    <alternativeName>
        <fullName evidence="1">Transcriptase subunit beta'</fullName>
    </alternativeName>
</protein>
<keyword id="KW-0240">DNA-directed RNA polymerase</keyword>
<keyword id="KW-0460">Magnesium</keyword>
<keyword id="KW-0479">Metal-binding</keyword>
<keyword id="KW-0548">Nucleotidyltransferase</keyword>
<keyword id="KW-1185">Reference proteome</keyword>
<keyword id="KW-0804">Transcription</keyword>
<keyword id="KW-0808">Transferase</keyword>
<keyword id="KW-0862">Zinc</keyword>
<sequence length="1399" mass="155727">MNQEIMNLFNPTTPAQVFDQIRISIASPEKILSWSYGEIKKPETINYRTFKPERDGLFCARIFGPIKDYECLCGKYKRMKYKGIICEKCSVEVTLSRVRRERMGHIELAAPVAHIWFLKSLPSRIGLLLDMTLKDLERILYFEYYVVLEPGLTALKDRQLLSEDEYLKAQDEYGQDSFTAMIGAEAIRELLRGLELEKLEQTLRAEMQETDSDIKHKKLAKRLKIVEAFRHSGNKPEWMIMTVVPVIPPDLRPLVPLDGGRFATSDLNDLYRRVINRNNRLKRLMELRAPDIIIRNEKRMLQEAVDALFDNGRRGRVITGANKRPLKSLADMLKGKQGRFRQNLLGKRVDYSGRSVIVVGPELRLHQCGLPKKMALELFKPFIYSRLDAKGLSTTVKQAKKLVEKERPEVWDILDEVIREHPVLLNRAPTLHRLGIQAFEPVLIEGKAIQLHPLVCSAFNADFDGDQMAVHVPLSLEAQLEARVLMMSTNNILHPANGQPIIVPSQDIVLGLYYVSIMREGMPGQGMTFGNMAELEHALHAKAIHLHSKIKYRWEGMNEEGKIAKRWIETTAGRVMLGNLLPKHPRVTFEVINKLMTKREISGVIDQVYRHCGQKETVIFCDRIMALGFYNAFKAGISFGKDDMVVPAGKWKIVDTTRTLAKDFEQQYNDGLITHGEKYNKVVDAWSKASEEIAKEMMKEISVTKKTATGADADINSIYMMSHSGARGSPAQMRQLAGMRGLMAKPSGEIIETPIISNFKEGLSVLEYFNSTHGARKGLADTALKTANSGYLTRRLVDVAQDCIITQDDCGTHLGIKMRAIVDAGTLVASLGSRILGRVPCDDVRDPATNAVLVKAGTLMEESHIDAIQQAGVQEVKIRSALTCELVNGICKMCYGRDLARGTPVNHGEAVGVIAAQSIGEPGTQLTMRTFHIGGAAQLNEQSFVESNFEGKVVIRNKAIARNSEGHLIAMVRNMVVTIVDPDGTERATHRIQYGSRMHVDDGDMIKRGQRIAEWDPYTRPILTEAEGTIGFEDLTEGLSISETLDESTGIAKRVVIDWRGTRGGADLRPAIVIKGKDGKVLKLARGGDARYMLSVDAILSVDIGATVKPGDILARISTESAKTRDITGGLPRVAELFEARKPKDAAIIAEIAGTIRFGRDYKNKRRISIEPVDKTEEAREYLIPKGKHIHLQDGDIVEKGDFIVEGNPAPHDILAIKGIEELAAYLVNEIQEVYRLQGVLINDKHIEVIVRQMLQKIEVTDQGDTDMIAGEQVDKIEFDALNAKAQEEGKKPASGNPVLLGITKASLQTRSFFSAASFQETTRVLTEAAVNGKIDPLEGLKENVIVGRLIPAGTGASMARIREVALKRDKLILDEREKQAAIVPSQPEPQPLALPPAE</sequence>
<name>RPOC_BRASO</name>
<proteinExistence type="inferred from homology"/>
<accession>A4YSI2</accession>
<reference key="1">
    <citation type="journal article" date="2007" name="Science">
        <title>Legumes symbioses: absence of nod genes in photosynthetic bradyrhizobia.</title>
        <authorList>
            <person name="Giraud E."/>
            <person name="Moulin L."/>
            <person name="Vallenet D."/>
            <person name="Barbe V."/>
            <person name="Cytryn E."/>
            <person name="Avarre J.-C."/>
            <person name="Jaubert M."/>
            <person name="Simon D."/>
            <person name="Cartieaux F."/>
            <person name="Prin Y."/>
            <person name="Bena G."/>
            <person name="Hannibal L."/>
            <person name="Fardoux J."/>
            <person name="Kojadinovic M."/>
            <person name="Vuillet L."/>
            <person name="Lajus A."/>
            <person name="Cruveiller S."/>
            <person name="Rouy Z."/>
            <person name="Mangenot S."/>
            <person name="Segurens B."/>
            <person name="Dossat C."/>
            <person name="Franck W.L."/>
            <person name="Chang W.-S."/>
            <person name="Saunders E."/>
            <person name="Bruce D."/>
            <person name="Richardson P."/>
            <person name="Normand P."/>
            <person name="Dreyfus B."/>
            <person name="Pignol D."/>
            <person name="Stacey G."/>
            <person name="Emerich D."/>
            <person name="Vermeglio A."/>
            <person name="Medigue C."/>
            <person name="Sadowsky M."/>
        </authorList>
    </citation>
    <scope>NUCLEOTIDE SEQUENCE [LARGE SCALE GENOMIC DNA]</scope>
    <source>
        <strain>ORS 278</strain>
    </source>
</reference>